<sequence length="957" mass="103349">MSLVSQNSRRRRRRVAKATAHNSSWDEMQAPNAPGFPADMPGSDVPQGPSDSQILQGLCASEGPSTSVLPTSAEGPSTFVPPTISEASSASGQPTVSEGPGTSLLATPSEGLSTSGPPTISKGLCTSVTLAASEGRNTSRPPTSSEEPSTSVPATPGEGTSTSVPPTASEGPSTSVVPTPDEGPSTSVQSTAGEGPSTPVPLTATEGLSTSVPDTPDEGLSTSVPPTATEGLSTPVPPTPDEGPSTSMPATPGEGRSTTMLPAASDGQSISLVPTPGKGSSTSGPPTATEGLSTSVQPTAGEGPSTSVPPTPCGGLSTSVPPTPGEGLSTSVPPTATEGLSTSVPPTPGEGPSTSVLPTPGEGRSTSVPPTASDGSDTSVPPTPGEGPSTLVQPTASDRPGSSVLPNPGEGPSTLFSSSASVDRNPSKCSIVLPSPRVTKASVDSDSEGPKGAEGPIEFEVLRDCESPNSITIMGLSTPRVAITLKPQDPMEQNVAELLQFLLVKDQSKYPIRESEMREYIVKEYRNQFPEILRRAAAHLECIFRFELRELDPEARTYILLNKLGPVPFEGLEESPNGPKMGLLMMILGQIFLNGNQAKEAEICEMLWRMGVQRERRLSIFGNPKRLLSVEFVWQRYLDYRPVTDCKPVEYEFFWGPRSHLETTKMKILKFMAKIYNKDPMDWPEQYNEALEEDAARAFAEGWQALPHFRRPFFEEAAAEVASPDSEVSSYSSKYAPHSWPESRLESKARKLVQLFLLMDSTKLPIPKEGILYYIGRECSKVFPDLLNRAARTLNHVYGTELVVLDPRNHSYTLYNRREMEETEEIVDSPNRPGNNFLMQVLSFIFIMGNHARESAVWAFLRGLGVQSGRKHVITCRYLSQRYIDSLRVPDSDPVQYEFVWGPRARLETSKMKALRYVARIHRKEPQDWPQQYREAMEDEANRADVGHRQFFVHNFR</sequence>
<feature type="chain" id="PRO_0000156730" description="Melanoma-associated antigen E1">
    <location>
        <begin position="1"/>
        <end position="957"/>
    </location>
</feature>
<feature type="domain" description="MAGE 1" evidence="2">
    <location>
        <begin position="491"/>
        <end position="690"/>
    </location>
</feature>
<feature type="domain" description="MAGE 2" evidence="2">
    <location>
        <begin position="745"/>
        <end position="936"/>
    </location>
</feature>
<feature type="region of interest" description="Disordered" evidence="3">
    <location>
        <begin position="1"/>
        <end position="433"/>
    </location>
</feature>
<feature type="region of interest" description="Interaction with DTNA" evidence="1">
    <location>
        <begin position="743"/>
        <end position="957"/>
    </location>
</feature>
<feature type="compositionally biased region" description="Polar residues" evidence="3">
    <location>
        <begin position="85"/>
        <end position="96"/>
    </location>
</feature>
<feature type="compositionally biased region" description="Polar residues" evidence="3">
    <location>
        <begin position="104"/>
        <end position="130"/>
    </location>
</feature>
<feature type="compositionally biased region" description="Low complexity" evidence="3">
    <location>
        <begin position="138"/>
        <end position="156"/>
    </location>
</feature>
<feature type="compositionally biased region" description="Polar residues" evidence="3">
    <location>
        <begin position="158"/>
        <end position="177"/>
    </location>
</feature>
<feature type="compositionally biased region" description="Polar residues" evidence="3">
    <location>
        <begin position="220"/>
        <end position="232"/>
    </location>
</feature>
<feature type="compositionally biased region" description="Polar residues" evidence="3">
    <location>
        <begin position="256"/>
        <end position="306"/>
    </location>
</feature>
<feature type="compositionally biased region" description="Polar residues" evidence="3">
    <location>
        <begin position="328"/>
        <end position="344"/>
    </location>
</feature>
<feature type="compositionally biased region" description="Polar residues" evidence="3">
    <location>
        <begin position="364"/>
        <end position="380"/>
    </location>
</feature>
<feature type="compositionally biased region" description="Polar residues" evidence="3">
    <location>
        <begin position="414"/>
        <end position="428"/>
    </location>
</feature>
<name>MAGE1_MACFA</name>
<dbReference type="EMBL" id="AB060233">
    <property type="protein sequence ID" value="BAB41162.1"/>
    <property type="molecule type" value="mRNA"/>
</dbReference>
<dbReference type="SMR" id="Q9BE18"/>
<dbReference type="STRING" id="9541.ENSMFAP00000038333"/>
<dbReference type="eggNOG" id="KOG4562">
    <property type="taxonomic scope" value="Eukaryota"/>
</dbReference>
<dbReference type="Proteomes" id="UP000233100">
    <property type="component" value="Unplaced"/>
</dbReference>
<dbReference type="GO" id="GO:0030425">
    <property type="term" value="C:dendrite"/>
    <property type="evidence" value="ECO:0000250"/>
    <property type="project" value="UniProtKB"/>
</dbReference>
<dbReference type="GO" id="GO:0005634">
    <property type="term" value="C:nucleus"/>
    <property type="evidence" value="ECO:0000250"/>
    <property type="project" value="UniProtKB"/>
</dbReference>
<dbReference type="GO" id="GO:0048471">
    <property type="term" value="C:perinuclear region of cytoplasm"/>
    <property type="evidence" value="ECO:0000250"/>
    <property type="project" value="UniProtKB"/>
</dbReference>
<dbReference type="GO" id="GO:0005886">
    <property type="term" value="C:plasma membrane"/>
    <property type="evidence" value="ECO:0000250"/>
    <property type="project" value="UniProtKB"/>
</dbReference>
<dbReference type="GO" id="GO:0045211">
    <property type="term" value="C:postsynaptic membrane"/>
    <property type="evidence" value="ECO:0000250"/>
    <property type="project" value="UniProtKB"/>
</dbReference>
<dbReference type="GO" id="GO:0000122">
    <property type="term" value="P:negative regulation of transcription by RNA polymerase II"/>
    <property type="evidence" value="ECO:0007669"/>
    <property type="project" value="TreeGrafter"/>
</dbReference>
<dbReference type="FunFam" id="1.10.10.1210:FF:000001">
    <property type="entry name" value="melanoma-associated antigen D1"/>
    <property type="match status" value="1"/>
</dbReference>
<dbReference type="FunFam" id="1.10.10.1200:FF:000004">
    <property type="entry name" value="Melanoma-associated antigen E1"/>
    <property type="match status" value="1"/>
</dbReference>
<dbReference type="FunFam" id="1.10.10.1200:FF:000006">
    <property type="entry name" value="Melanoma-associated antigen E1"/>
    <property type="match status" value="1"/>
</dbReference>
<dbReference type="FunFam" id="1.10.10.1210:FF:000002">
    <property type="entry name" value="melanoma-associated antigen E1"/>
    <property type="match status" value="1"/>
</dbReference>
<dbReference type="Gene3D" id="1.10.10.1200">
    <property type="entry name" value="MAGE homology domain, winged helix WH1 motif"/>
    <property type="match status" value="2"/>
</dbReference>
<dbReference type="Gene3D" id="1.10.10.1210">
    <property type="entry name" value="MAGE homology domain, winged helix WH2 motif"/>
    <property type="match status" value="2"/>
</dbReference>
<dbReference type="InterPro" id="IPR037445">
    <property type="entry name" value="MAGE"/>
</dbReference>
<dbReference type="InterPro" id="IPR041898">
    <property type="entry name" value="MAGE_WH1"/>
</dbReference>
<dbReference type="InterPro" id="IPR041899">
    <property type="entry name" value="MAGE_WH2"/>
</dbReference>
<dbReference type="InterPro" id="IPR002190">
    <property type="entry name" value="MHD_dom"/>
</dbReference>
<dbReference type="PANTHER" id="PTHR11736:SF9">
    <property type="entry name" value="MELANOMA-ASSOCIATED ANTIGEN E1"/>
    <property type="match status" value="1"/>
</dbReference>
<dbReference type="PANTHER" id="PTHR11736">
    <property type="entry name" value="MELANOMA-ASSOCIATED ANTIGEN MAGE ANTIGEN"/>
    <property type="match status" value="1"/>
</dbReference>
<dbReference type="Pfam" id="PF01454">
    <property type="entry name" value="MAGE"/>
    <property type="match status" value="2"/>
</dbReference>
<dbReference type="SMART" id="SM01373">
    <property type="entry name" value="MAGE"/>
    <property type="match status" value="2"/>
</dbReference>
<dbReference type="PROSITE" id="PS50838">
    <property type="entry name" value="MAGE"/>
    <property type="match status" value="2"/>
</dbReference>
<protein>
    <recommendedName>
        <fullName>Melanoma-associated antigen E1</fullName>
    </recommendedName>
    <alternativeName>
        <fullName>Alpha-dystrobrevin-associated MAGE Protein</fullName>
        <shortName>DAMAGE</shortName>
    </alternativeName>
    <alternativeName>
        <fullName>MAGE-E1 antigen</fullName>
    </alternativeName>
</protein>
<reference key="1">
    <citation type="submission" date="2001-04" db="EMBL/GenBank/DDBJ databases">
        <title>Isolation of full-length cDNA clones from macaque brain cDNA libraries.</title>
        <authorList>
            <person name="Osada N."/>
            <person name="Hida M."/>
            <person name="Kusuda J."/>
            <person name="Tanuma R."/>
            <person name="Iseki K."/>
            <person name="Hirai M."/>
            <person name="Terao K."/>
            <person name="Suzuki Y."/>
            <person name="Sugano S."/>
            <person name="Hashimoto K."/>
        </authorList>
    </citation>
    <scope>NUCLEOTIDE SEQUENCE [LARGE SCALE MRNA]</scope>
    <source>
        <tissue>Frontal cortex</tissue>
    </source>
</reference>
<organism>
    <name type="scientific">Macaca fascicularis</name>
    <name type="common">Crab-eating macaque</name>
    <name type="synonym">Cynomolgus monkey</name>
    <dbReference type="NCBI Taxonomy" id="9541"/>
    <lineage>
        <taxon>Eukaryota</taxon>
        <taxon>Metazoa</taxon>
        <taxon>Chordata</taxon>
        <taxon>Craniata</taxon>
        <taxon>Vertebrata</taxon>
        <taxon>Euteleostomi</taxon>
        <taxon>Mammalia</taxon>
        <taxon>Eutheria</taxon>
        <taxon>Euarchontoglires</taxon>
        <taxon>Primates</taxon>
        <taxon>Haplorrhini</taxon>
        <taxon>Catarrhini</taxon>
        <taxon>Cercopithecidae</taxon>
        <taxon>Cercopithecinae</taxon>
        <taxon>Macaca</taxon>
    </lineage>
</organism>
<proteinExistence type="evidence at transcript level"/>
<accession>Q9BE18</accession>
<evidence type="ECO:0000250" key="1"/>
<evidence type="ECO:0000255" key="2">
    <source>
        <dbReference type="PROSITE-ProRule" id="PRU00127"/>
    </source>
</evidence>
<evidence type="ECO:0000256" key="3">
    <source>
        <dbReference type="SAM" id="MobiDB-lite"/>
    </source>
</evidence>
<comment type="function">
    <text evidence="1">May enhance ubiquitin ligase activity of RING-type zinc finger-containing E3 ubiquitin-protein ligases. Proposed to act through recruitment and/or stabilization of the Ubl-conjugating enzyme (E2) at the E3:substrate complex (By similarity).</text>
</comment>
<comment type="subunit">
    <text evidence="1">Interacts with DTNA. Interacts with TRIM28 (By similarity).</text>
</comment>
<comment type="subcellular location">
    <subcellularLocation>
        <location evidence="1">Cytoplasm</location>
        <location evidence="1">Perinuclear region</location>
    </subcellularLocation>
    <subcellularLocation>
        <location evidence="1">Nucleus</location>
    </subcellularLocation>
    <subcellularLocation>
        <location evidence="1">Cell membrane</location>
    </subcellularLocation>
    <text evidence="1">In the skeletal muscle, found at the postsynaptic membrane and is associated with a subset of myonuclei. May reside within nuclei and/or in perinuclear compartments. In peripheral nerves, colocalizes with DTNA in the Schwann cell membrane (By similarity).</text>
</comment>
<keyword id="KW-1003">Cell membrane</keyword>
<keyword id="KW-0963">Cytoplasm</keyword>
<keyword id="KW-0472">Membrane</keyword>
<keyword id="KW-0539">Nucleus</keyword>
<keyword id="KW-1185">Reference proteome</keyword>
<keyword id="KW-0677">Repeat</keyword>
<keyword id="KW-0825">Tumor antigen</keyword>
<keyword id="KW-0833">Ubl conjugation pathway</keyword>
<gene>
    <name type="primary">MAGEE1</name>
    <name type="ORF">QflA-10248</name>
</gene>